<comment type="function">
    <text evidence="1">Molecular chaperone. Has ATPase activity.</text>
</comment>
<comment type="subunit">
    <text evidence="1">Homodimer.</text>
</comment>
<comment type="subcellular location">
    <subcellularLocation>
        <location evidence="1">Cytoplasm</location>
    </subcellularLocation>
</comment>
<comment type="similarity">
    <text evidence="1">Belongs to the heat shock protein 90 family.</text>
</comment>
<gene>
    <name evidence="1" type="primary">htpG</name>
    <name type="ordered locus">RD1_3696</name>
</gene>
<accession>Q162C5</accession>
<name>HTPG_ROSDO</name>
<proteinExistence type="inferred from homology"/>
<organism>
    <name type="scientific">Roseobacter denitrificans (strain ATCC 33942 / OCh 114)</name>
    <name type="common">Erythrobacter sp. (strain OCh 114)</name>
    <name type="synonym">Roseobacter denitrificans</name>
    <dbReference type="NCBI Taxonomy" id="375451"/>
    <lineage>
        <taxon>Bacteria</taxon>
        <taxon>Pseudomonadati</taxon>
        <taxon>Pseudomonadota</taxon>
        <taxon>Alphaproteobacteria</taxon>
        <taxon>Rhodobacterales</taxon>
        <taxon>Roseobacteraceae</taxon>
        <taxon>Roseobacter</taxon>
    </lineage>
</organism>
<protein>
    <recommendedName>
        <fullName evidence="1">Chaperone protein HtpG</fullName>
    </recommendedName>
    <alternativeName>
        <fullName evidence="1">Heat shock protein HtpG</fullName>
    </alternativeName>
    <alternativeName>
        <fullName evidence="1">High temperature protein G</fullName>
    </alternativeName>
</protein>
<evidence type="ECO:0000255" key="1">
    <source>
        <dbReference type="HAMAP-Rule" id="MF_00505"/>
    </source>
</evidence>
<sequence length="621" mass="68991">MTDASVKETFSFQTEVGQLLDIVAGSLYSNREIFLRELVSNASDACDKLRYEALTNPSLAQNADEFAISLAVDKKAKTLSVSDNGIGMNHGDLLDTLGTIARSGTGAFLDALKSEEKGDIGLIGQFGVGFYSAFMVAERVDVLTRKAGEDESWLWSSDGKGEFSIEPGERAQSGTTVTLHLKKDAKEFLEESRIRHIIKTYSEHISFPVRLDTEALNSASAIWTRAPKEITEEQHTEFYHHVSNAFDKPWHVLHNRVEGTVNHTSLLYVPSMAPFDLYEAERKSHVKLYVNRVFISDNTRDLIPAYLRFLRGVVDSQDLSLNVSREMLQSDPKLAKIKTSVTKKVLSELKKKAKKSPEDYAGFWQNFGPVLKEGLIEDPALRDRILEICRFSSTKSGDVTSLADYISRCKEGQDAIYYIAGDDARKIAQSPHLEGFRAKDVEVLLLSDHVDEFWLQHITEFEGKPFKSITRGAADLDKINEGEKADDAEEEAQAPDLNDLIAALKLELGASVKDVRPSKRLTDSPVCLIADEGDIDVNLERMLKRHGQLQDAMPRVLELNPDHRIITKLAERAKGSAAASDTLLKDAAHLLLDQARIADGETPADPAEFVRRLGSVMDSAL</sequence>
<feature type="chain" id="PRO_0000258526" description="Chaperone protein HtpG">
    <location>
        <begin position="1"/>
        <end position="621"/>
    </location>
</feature>
<feature type="region of interest" description="A; substrate-binding" evidence="1">
    <location>
        <begin position="1"/>
        <end position="325"/>
    </location>
</feature>
<feature type="region of interest" description="B" evidence="1">
    <location>
        <begin position="326"/>
        <end position="541"/>
    </location>
</feature>
<feature type="region of interest" description="C" evidence="1">
    <location>
        <begin position="542"/>
        <end position="621"/>
    </location>
</feature>
<keyword id="KW-0067">ATP-binding</keyword>
<keyword id="KW-0143">Chaperone</keyword>
<keyword id="KW-0963">Cytoplasm</keyword>
<keyword id="KW-0547">Nucleotide-binding</keyword>
<keyword id="KW-1185">Reference proteome</keyword>
<keyword id="KW-0346">Stress response</keyword>
<dbReference type="EMBL" id="CP000362">
    <property type="protein sequence ID" value="ABG33168.1"/>
    <property type="molecule type" value="Genomic_DNA"/>
</dbReference>
<dbReference type="RefSeq" id="WP_011569779.1">
    <property type="nucleotide sequence ID" value="NC_008209.1"/>
</dbReference>
<dbReference type="SMR" id="Q162C5"/>
<dbReference type="STRING" id="375451.RD1_3696"/>
<dbReference type="KEGG" id="rde:RD1_3696"/>
<dbReference type="eggNOG" id="COG0326">
    <property type="taxonomic scope" value="Bacteria"/>
</dbReference>
<dbReference type="HOGENOM" id="CLU_006684_3_0_5"/>
<dbReference type="OrthoDB" id="9802640at2"/>
<dbReference type="Proteomes" id="UP000007029">
    <property type="component" value="Chromosome"/>
</dbReference>
<dbReference type="GO" id="GO:0005737">
    <property type="term" value="C:cytoplasm"/>
    <property type="evidence" value="ECO:0007669"/>
    <property type="project" value="UniProtKB-SubCell"/>
</dbReference>
<dbReference type="GO" id="GO:0005524">
    <property type="term" value="F:ATP binding"/>
    <property type="evidence" value="ECO:0007669"/>
    <property type="project" value="UniProtKB-UniRule"/>
</dbReference>
<dbReference type="GO" id="GO:0016887">
    <property type="term" value="F:ATP hydrolysis activity"/>
    <property type="evidence" value="ECO:0007669"/>
    <property type="project" value="InterPro"/>
</dbReference>
<dbReference type="GO" id="GO:0140662">
    <property type="term" value="F:ATP-dependent protein folding chaperone"/>
    <property type="evidence" value="ECO:0007669"/>
    <property type="project" value="InterPro"/>
</dbReference>
<dbReference type="GO" id="GO:0051082">
    <property type="term" value="F:unfolded protein binding"/>
    <property type="evidence" value="ECO:0007669"/>
    <property type="project" value="UniProtKB-UniRule"/>
</dbReference>
<dbReference type="CDD" id="cd16927">
    <property type="entry name" value="HATPase_Hsp90-like"/>
    <property type="match status" value="1"/>
</dbReference>
<dbReference type="FunFam" id="3.30.565.10:FF:000009">
    <property type="entry name" value="Molecular chaperone HtpG"/>
    <property type="match status" value="1"/>
</dbReference>
<dbReference type="Gene3D" id="3.30.230.80">
    <property type="match status" value="1"/>
</dbReference>
<dbReference type="Gene3D" id="3.40.50.11260">
    <property type="match status" value="1"/>
</dbReference>
<dbReference type="Gene3D" id="1.20.120.790">
    <property type="entry name" value="Heat shock protein 90, C-terminal domain"/>
    <property type="match status" value="1"/>
</dbReference>
<dbReference type="Gene3D" id="3.30.565.10">
    <property type="entry name" value="Histidine kinase-like ATPase, C-terminal domain"/>
    <property type="match status" value="1"/>
</dbReference>
<dbReference type="HAMAP" id="MF_00505">
    <property type="entry name" value="HSP90"/>
    <property type="match status" value="1"/>
</dbReference>
<dbReference type="InterPro" id="IPR036890">
    <property type="entry name" value="HATPase_C_sf"/>
</dbReference>
<dbReference type="InterPro" id="IPR019805">
    <property type="entry name" value="Heat_shock_protein_90_CS"/>
</dbReference>
<dbReference type="InterPro" id="IPR037196">
    <property type="entry name" value="HSP90_C"/>
</dbReference>
<dbReference type="InterPro" id="IPR001404">
    <property type="entry name" value="Hsp90_fam"/>
</dbReference>
<dbReference type="InterPro" id="IPR020575">
    <property type="entry name" value="Hsp90_N"/>
</dbReference>
<dbReference type="InterPro" id="IPR020568">
    <property type="entry name" value="Ribosomal_Su5_D2-typ_SF"/>
</dbReference>
<dbReference type="NCBIfam" id="NF003555">
    <property type="entry name" value="PRK05218.1"/>
    <property type="match status" value="1"/>
</dbReference>
<dbReference type="PANTHER" id="PTHR11528">
    <property type="entry name" value="HEAT SHOCK PROTEIN 90 FAMILY MEMBER"/>
    <property type="match status" value="1"/>
</dbReference>
<dbReference type="Pfam" id="PF13589">
    <property type="entry name" value="HATPase_c_3"/>
    <property type="match status" value="1"/>
</dbReference>
<dbReference type="Pfam" id="PF00183">
    <property type="entry name" value="HSP90"/>
    <property type="match status" value="1"/>
</dbReference>
<dbReference type="PIRSF" id="PIRSF002583">
    <property type="entry name" value="Hsp90"/>
    <property type="match status" value="1"/>
</dbReference>
<dbReference type="PRINTS" id="PR00775">
    <property type="entry name" value="HEATSHOCK90"/>
</dbReference>
<dbReference type="SMART" id="SM00387">
    <property type="entry name" value="HATPase_c"/>
    <property type="match status" value="1"/>
</dbReference>
<dbReference type="SUPFAM" id="SSF55874">
    <property type="entry name" value="ATPase domain of HSP90 chaperone/DNA topoisomerase II/histidine kinase"/>
    <property type="match status" value="1"/>
</dbReference>
<dbReference type="SUPFAM" id="SSF110942">
    <property type="entry name" value="HSP90 C-terminal domain"/>
    <property type="match status" value="1"/>
</dbReference>
<dbReference type="SUPFAM" id="SSF54211">
    <property type="entry name" value="Ribosomal protein S5 domain 2-like"/>
    <property type="match status" value="1"/>
</dbReference>
<dbReference type="PROSITE" id="PS00298">
    <property type="entry name" value="HSP90"/>
    <property type="match status" value="1"/>
</dbReference>
<reference key="1">
    <citation type="journal article" date="2007" name="J. Bacteriol.">
        <title>The complete genome sequence of Roseobacter denitrificans reveals a mixotrophic rather than photosynthetic metabolism.</title>
        <authorList>
            <person name="Swingley W.D."/>
            <person name="Sadekar S."/>
            <person name="Mastrian S.D."/>
            <person name="Matthies H.J."/>
            <person name="Hao J."/>
            <person name="Ramos H."/>
            <person name="Acharya C.R."/>
            <person name="Conrad A.L."/>
            <person name="Taylor H.L."/>
            <person name="Dejesa L.C."/>
            <person name="Shah M.K."/>
            <person name="O'Huallachain M.E."/>
            <person name="Lince M.T."/>
            <person name="Blankenship R.E."/>
            <person name="Beatty J.T."/>
            <person name="Touchman J.W."/>
        </authorList>
    </citation>
    <scope>NUCLEOTIDE SEQUENCE [LARGE SCALE GENOMIC DNA]</scope>
    <source>
        <strain>ATCC 33942 / OCh 114</strain>
    </source>
</reference>